<keyword id="KW-1003">Cell membrane</keyword>
<keyword id="KW-0968">Cytoplasmic vesicle</keyword>
<keyword id="KW-0551">Lipid droplet</keyword>
<keyword id="KW-0472">Membrane</keyword>
<keyword id="KW-0597">Phosphoprotein</keyword>
<keyword id="KW-1185">Reference proteome</keyword>
<keyword id="KW-0677">Repeat</keyword>
<keyword id="KW-0812">Transmembrane</keyword>
<keyword id="KW-1133">Transmembrane helix</keyword>
<keyword id="KW-0813">Transport</keyword>
<gene>
    <name type="primary">AQP7</name>
    <name type="ORF">QtsA-18739</name>
</gene>
<evidence type="ECO:0000250" key="1">
    <source>
        <dbReference type="UniProtKB" id="O14520"/>
    </source>
</evidence>
<evidence type="ECO:0000250" key="2">
    <source>
        <dbReference type="UniProtKB" id="O54794"/>
    </source>
</evidence>
<evidence type="ECO:0000250" key="3">
    <source>
        <dbReference type="UniProtKB" id="P56403"/>
    </source>
</evidence>
<evidence type="ECO:0000305" key="4"/>
<name>AQP7_MACFA</name>
<accession>Q4R691</accession>
<organism>
    <name type="scientific">Macaca fascicularis</name>
    <name type="common">Crab-eating macaque</name>
    <name type="synonym">Cynomolgus monkey</name>
    <dbReference type="NCBI Taxonomy" id="9541"/>
    <lineage>
        <taxon>Eukaryota</taxon>
        <taxon>Metazoa</taxon>
        <taxon>Chordata</taxon>
        <taxon>Craniata</taxon>
        <taxon>Vertebrata</taxon>
        <taxon>Euteleostomi</taxon>
        <taxon>Mammalia</taxon>
        <taxon>Eutheria</taxon>
        <taxon>Euarchontoglires</taxon>
        <taxon>Primates</taxon>
        <taxon>Haplorrhini</taxon>
        <taxon>Catarrhini</taxon>
        <taxon>Cercopithecidae</taxon>
        <taxon>Cercopithecinae</taxon>
        <taxon>Macaca</taxon>
    </lineage>
</organism>
<reference key="1">
    <citation type="submission" date="2005-06" db="EMBL/GenBank/DDBJ databases">
        <title>DNA sequences of macaque genes expressed in brain or testis and its evolutionary implications.</title>
        <authorList>
            <consortium name="International consortium for macaque cDNA sequencing and analysis"/>
        </authorList>
    </citation>
    <scope>NUCLEOTIDE SEQUENCE [LARGE SCALE MRNA]</scope>
    <source>
        <tissue>Testis</tissue>
    </source>
</reference>
<feature type="chain" id="PRO_0000286052" description="Aquaporin-7">
    <location>
        <begin position="1"/>
        <end position="342"/>
    </location>
</feature>
<feature type="topological domain" description="Cytoplasmic" evidence="1">
    <location>
        <begin position="1"/>
        <end position="36"/>
    </location>
</feature>
<feature type="transmembrane region" description="Helical; Name=1" evidence="1">
    <location>
        <begin position="37"/>
        <end position="54"/>
    </location>
</feature>
<feature type="topological domain" description="Extracellular" evidence="1">
    <location>
        <begin position="55"/>
        <end position="67"/>
    </location>
</feature>
<feature type="transmembrane region" description="Helical; Name=2" evidence="1">
    <location>
        <begin position="68"/>
        <end position="85"/>
    </location>
</feature>
<feature type="topological domain" description="Cytoplasmic" evidence="1">
    <location>
        <begin position="86"/>
        <end position="89"/>
    </location>
</feature>
<feature type="intramembrane region" description="Discontinuously helical" evidence="1">
    <location>
        <begin position="90"/>
        <end position="103"/>
    </location>
</feature>
<feature type="topological domain" description="Cytoplasmic" evidence="1">
    <location>
        <begin position="104"/>
        <end position="111"/>
    </location>
</feature>
<feature type="transmembrane region" description="Helical; Name=3" evidence="1">
    <location>
        <begin position="112"/>
        <end position="132"/>
    </location>
</feature>
<feature type="topological domain" description="Extracellular" evidence="1">
    <location>
        <begin position="133"/>
        <end position="167"/>
    </location>
</feature>
<feature type="transmembrane region" description="Helical; Name=4" evidence="1">
    <location>
        <begin position="168"/>
        <end position="188"/>
    </location>
</feature>
<feature type="topological domain" description="Cytoplasmic" evidence="1">
    <location>
        <begin position="189"/>
        <end position="200"/>
    </location>
</feature>
<feature type="transmembrane region" description="Helical; Name=5" evidence="1">
    <location>
        <begin position="201"/>
        <end position="217"/>
    </location>
</feature>
<feature type="topological domain" description="Extracellular" evidence="1">
    <location>
        <begin position="218"/>
        <end position="221"/>
    </location>
</feature>
<feature type="intramembrane region" description="Discontinuously helical" evidence="1">
    <location>
        <begin position="222"/>
        <end position="235"/>
    </location>
</feature>
<feature type="topological domain" description="Extracellular" evidence="1">
    <location>
        <begin position="236"/>
        <end position="253"/>
    </location>
</feature>
<feature type="transmembrane region" description="Helical; Name=6" evidence="1">
    <location>
        <begin position="254"/>
        <end position="275"/>
    </location>
</feature>
<feature type="topological domain" description="Cytoplasmic" evidence="1">
    <location>
        <begin position="276"/>
        <end position="342"/>
    </location>
</feature>
<feature type="short sequence motif" description="NPA 1" evidence="1">
    <location>
        <begin position="94"/>
        <end position="96"/>
    </location>
</feature>
<feature type="short sequence motif" description="NPA 2" evidence="1">
    <location>
        <begin position="226"/>
        <end position="228"/>
    </location>
</feature>
<feature type="site" description="Selectivity filter" evidence="1">
    <location>
        <position position="74"/>
    </location>
</feature>
<feature type="site" description="Important for permeability to glycerol" evidence="1">
    <location>
        <position position="135"/>
    </location>
</feature>
<feature type="site" description="Selectivity filter" evidence="1">
    <location>
        <position position="223"/>
    </location>
</feature>
<feature type="site" description="Selectivity filter" evidence="1">
    <location>
        <position position="229"/>
    </location>
</feature>
<feature type="modified residue" description="Phosphoserine" evidence="3">
    <location>
        <position position="20"/>
    </location>
</feature>
<proteinExistence type="evidence at transcript level"/>
<sequence>MVQTSRHRRSTRGSKMVSWSVMAKIQEILQKKMVREFLAEFMSTYVMMVFGLGSVAHMVLNKKYGSYLGVNLGFGFGVTMGVHVAGHISGAHMNAAVTFANCALGRVPWRKFPVYVLGQFLGSFLAAATIYTLFYTAILHFSGGQLMVTGPVATAGIFATYLPDHMTLWRGFLNEAWLTGMLQLCLFAITDQENNAALPGTQALVIGILVVIIGVSLGMNTGYAINPSRDLPPRVFTFIAGWGKEVFSEGENWWWVPVVAPLLGACLGGIIYLVFIGSTTPREPLKLEDSVAYEDHGITVLPKMGSHEPTISPLTPVSVSPANRSSVRPAPPLHESMALGHF</sequence>
<dbReference type="EMBL" id="AB169297">
    <property type="protein sequence ID" value="BAE01384.1"/>
    <property type="molecule type" value="mRNA"/>
</dbReference>
<dbReference type="RefSeq" id="NP_001270808.1">
    <property type="nucleotide sequence ID" value="NM_001283879.1"/>
</dbReference>
<dbReference type="SMR" id="Q4R691"/>
<dbReference type="STRING" id="9541.ENSMFAP00000015983"/>
<dbReference type="eggNOG" id="KOG0224">
    <property type="taxonomic scope" value="Eukaryota"/>
</dbReference>
<dbReference type="Proteomes" id="UP000233100">
    <property type="component" value="Unplaced"/>
</dbReference>
<dbReference type="GO" id="GO:0016323">
    <property type="term" value="C:basolateral plasma membrane"/>
    <property type="evidence" value="ECO:0007669"/>
    <property type="project" value="TreeGrafter"/>
</dbReference>
<dbReference type="GO" id="GO:0030659">
    <property type="term" value="C:cytoplasmic vesicle membrane"/>
    <property type="evidence" value="ECO:0007669"/>
    <property type="project" value="UniProtKB-SubCell"/>
</dbReference>
<dbReference type="GO" id="GO:0005811">
    <property type="term" value="C:lipid droplet"/>
    <property type="evidence" value="ECO:0007669"/>
    <property type="project" value="UniProtKB-SubCell"/>
</dbReference>
<dbReference type="GO" id="GO:0005886">
    <property type="term" value="C:plasma membrane"/>
    <property type="evidence" value="ECO:0000250"/>
    <property type="project" value="UniProtKB"/>
</dbReference>
<dbReference type="GO" id="GO:0015254">
    <property type="term" value="F:glycerol channel activity"/>
    <property type="evidence" value="ECO:0000250"/>
    <property type="project" value="UniProtKB"/>
</dbReference>
<dbReference type="GO" id="GO:0015204">
    <property type="term" value="F:urea transmembrane transporter activity"/>
    <property type="evidence" value="ECO:0000250"/>
    <property type="project" value="UniProtKB"/>
</dbReference>
<dbReference type="GO" id="GO:0015250">
    <property type="term" value="F:water channel activity"/>
    <property type="evidence" value="ECO:0000250"/>
    <property type="project" value="UniProtKB"/>
</dbReference>
<dbReference type="GO" id="GO:0015793">
    <property type="term" value="P:glycerol transmembrane transport"/>
    <property type="evidence" value="ECO:0000250"/>
    <property type="project" value="UniProtKB"/>
</dbReference>
<dbReference type="GO" id="GO:0006833">
    <property type="term" value="P:water transport"/>
    <property type="evidence" value="ECO:0000250"/>
    <property type="project" value="UniProtKB"/>
</dbReference>
<dbReference type="CDD" id="cd00333">
    <property type="entry name" value="MIP"/>
    <property type="match status" value="1"/>
</dbReference>
<dbReference type="FunFam" id="1.20.1080.10:FF:000005">
    <property type="entry name" value="Aquaporin 3"/>
    <property type="match status" value="1"/>
</dbReference>
<dbReference type="Gene3D" id="1.20.1080.10">
    <property type="entry name" value="Glycerol uptake facilitator protein"/>
    <property type="match status" value="1"/>
</dbReference>
<dbReference type="InterPro" id="IPR023271">
    <property type="entry name" value="Aquaporin-like"/>
</dbReference>
<dbReference type="InterPro" id="IPR000425">
    <property type="entry name" value="MIP"/>
</dbReference>
<dbReference type="InterPro" id="IPR050363">
    <property type="entry name" value="MIP/Aquaporin"/>
</dbReference>
<dbReference type="NCBIfam" id="TIGR00861">
    <property type="entry name" value="MIP"/>
    <property type="match status" value="1"/>
</dbReference>
<dbReference type="PANTHER" id="PTHR43829">
    <property type="entry name" value="AQUAPORIN OR AQUAGLYCEROPORIN RELATED"/>
    <property type="match status" value="1"/>
</dbReference>
<dbReference type="PANTHER" id="PTHR43829:SF15">
    <property type="entry name" value="AQUAPORIN-7"/>
    <property type="match status" value="1"/>
</dbReference>
<dbReference type="Pfam" id="PF00230">
    <property type="entry name" value="MIP"/>
    <property type="match status" value="1"/>
</dbReference>
<dbReference type="PRINTS" id="PR02019">
    <property type="entry name" value="AQUAPORIN7"/>
</dbReference>
<dbReference type="PRINTS" id="PR00783">
    <property type="entry name" value="MINTRINSICP"/>
</dbReference>
<dbReference type="SUPFAM" id="SSF81338">
    <property type="entry name" value="Aquaporin-like"/>
    <property type="match status" value="1"/>
</dbReference>
<protein>
    <recommendedName>
        <fullName>Aquaporin-7</fullName>
        <shortName>AQP-7</shortName>
    </recommendedName>
    <alternativeName>
        <fullName>Aquaglyceroporin-7</fullName>
    </alternativeName>
</protein>
<comment type="function">
    <text evidence="1 2">Aquaglyceroporins form homotetrameric transmembrane channels, with each monomer independently mediating glycerol and water transport across the plasma membrane along their osmotic gradient. Could also be permeable to urea (By similarity). Mediates the efflux of glycerol, formed upon triglyceride hydrolysis, to avoid its accumulation in adipocytes and to make it available to other tissues. In the kidney, mediates the reabsorption of glycerol, preventing its loss in urine, again participating to energy homeostasis. In pancreatic beta cells, it also mediates the efflux of glycerol, regulating its intracellular levels (By similarity).</text>
</comment>
<comment type="catalytic activity">
    <reaction evidence="1">
        <text>glycerol(in) = glycerol(out)</text>
        <dbReference type="Rhea" id="RHEA:29675"/>
        <dbReference type="ChEBI" id="CHEBI:17754"/>
    </reaction>
</comment>
<comment type="catalytic activity">
    <reaction evidence="1">
        <text>H2O(in) = H2O(out)</text>
        <dbReference type="Rhea" id="RHEA:29667"/>
        <dbReference type="ChEBI" id="CHEBI:15377"/>
    </reaction>
</comment>
<comment type="catalytic activity">
    <reaction evidence="1">
        <text>urea(in) = urea(out)</text>
        <dbReference type="Rhea" id="RHEA:32799"/>
        <dbReference type="ChEBI" id="CHEBI:16199"/>
    </reaction>
</comment>
<comment type="activity regulation">
    <text evidence="1">Glycerol transport is regulated by pH, with the porin being permeable to glycerol at pH 7.4 but not at pH 5.5. Water permeability, however, is not influenced by pH.</text>
</comment>
<comment type="subunit">
    <text evidence="1">Homotetramer; each monomer provides an independent glycerol/water pore. Two homotetramers on opposing membranes can dimerize, forming a cell-cell junction. Interacts with PLIN1.</text>
</comment>
<comment type="subcellular location">
    <subcellularLocation>
        <location evidence="1">Cell membrane</location>
        <topology evidence="1">Multi-pass membrane protein</topology>
    </subcellularLocation>
    <subcellularLocation>
        <location evidence="1">Cytoplasmic vesicle membrane</location>
        <topology evidence="1">Multi-pass membrane protein</topology>
    </subcellularLocation>
    <subcellularLocation>
        <location evidence="1">Lipid droplet</location>
    </subcellularLocation>
    <text evidence="1 2">Internalized from the cell membrane in response to catecholamine-induced activation of PKA; detected on intracellular membranes and colocalizes with lipid droplets (By similarity). Colocalizes with PLIN1 in adipocytes, probably on lipid droplets (By similarity).</text>
</comment>
<comment type="domain">
    <text evidence="1">Aquaporins contain two tandem repeats each containing three membrane-spanning domains and a pore-forming loop with the signature motif Asn-Pro/Ala-Ala/Ser (NPA).</text>
</comment>
<comment type="PTM">
    <text evidence="1">Phosphorylation by PKA could prevent the interaction with PLIN1.</text>
</comment>
<comment type="similarity">
    <text evidence="4">Belongs to the MIP/aquaporin (TC 1.A.8) family.</text>
</comment>